<sequence>MITLEVDLGERSYPIHIGTGLLDNAELLRPHVRGQHAVIVTNETVGPLYAARVEAALAALGKTVRTVTLPDGEAFKHWETLNRIFDALLQAGADRKTTLVALGGGVVGDMTGFAAACYMRGVPFIQMPTTLLAQVDSSVGGKTGINHPLGKNMIGAFHQPNAVIADIDTLRTLPARELAAGMAEVIKHGAIADAEYFGWIERNIKPLNACDPDLMALAVQRSCEIKAGVVAQDEREGGLRAILNFGHTFGHAIEAGMGYGAWLHGEAVGCGMVMAADLSHRLGFIDTETRARIRELTQAANLPVVAPELGADRYIELMKVDKKAEAGSIKFILLKQLGEAFITTVPDADLRATLAHAVLKPPTEAPVA</sequence>
<comment type="function">
    <text evidence="1">Catalyzes the conversion of 3-deoxy-D-arabino-heptulosonate 7-phosphate (DAHP) to dehydroquinate (DHQ).</text>
</comment>
<comment type="catalytic activity">
    <reaction evidence="1">
        <text>7-phospho-2-dehydro-3-deoxy-D-arabino-heptonate = 3-dehydroquinate + phosphate</text>
        <dbReference type="Rhea" id="RHEA:21968"/>
        <dbReference type="ChEBI" id="CHEBI:32364"/>
        <dbReference type="ChEBI" id="CHEBI:43474"/>
        <dbReference type="ChEBI" id="CHEBI:58394"/>
        <dbReference type="EC" id="4.2.3.4"/>
    </reaction>
</comment>
<comment type="cofactor">
    <cofactor evidence="1">
        <name>Co(2+)</name>
        <dbReference type="ChEBI" id="CHEBI:48828"/>
    </cofactor>
    <cofactor evidence="1">
        <name>Zn(2+)</name>
        <dbReference type="ChEBI" id="CHEBI:29105"/>
    </cofactor>
    <text evidence="1">Binds 1 divalent metal cation per subunit. Can use either Co(2+) or Zn(2+).</text>
</comment>
<comment type="cofactor">
    <cofactor evidence="1">
        <name>NAD(+)</name>
        <dbReference type="ChEBI" id="CHEBI:57540"/>
    </cofactor>
</comment>
<comment type="pathway">
    <text evidence="1">Metabolic intermediate biosynthesis; chorismate biosynthesis; chorismate from D-erythrose 4-phosphate and phosphoenolpyruvate: step 2/7.</text>
</comment>
<comment type="subcellular location">
    <subcellularLocation>
        <location evidence="1">Cytoplasm</location>
    </subcellularLocation>
</comment>
<comment type="similarity">
    <text evidence="1">Belongs to the sugar phosphate cyclases superfamily. Dehydroquinate synthase family.</text>
</comment>
<feature type="chain" id="PRO_1000094578" description="3-dehydroquinate synthase">
    <location>
        <begin position="1"/>
        <end position="368"/>
    </location>
</feature>
<feature type="binding site" evidence="1">
    <location>
        <begin position="71"/>
        <end position="76"/>
    </location>
    <ligand>
        <name>NAD(+)</name>
        <dbReference type="ChEBI" id="CHEBI:57540"/>
    </ligand>
</feature>
<feature type="binding site" evidence="1">
    <location>
        <begin position="105"/>
        <end position="109"/>
    </location>
    <ligand>
        <name>NAD(+)</name>
        <dbReference type="ChEBI" id="CHEBI:57540"/>
    </ligand>
</feature>
<feature type="binding site" evidence="1">
    <location>
        <begin position="129"/>
        <end position="130"/>
    </location>
    <ligand>
        <name>NAD(+)</name>
        <dbReference type="ChEBI" id="CHEBI:57540"/>
    </ligand>
</feature>
<feature type="binding site" evidence="1">
    <location>
        <position position="142"/>
    </location>
    <ligand>
        <name>NAD(+)</name>
        <dbReference type="ChEBI" id="CHEBI:57540"/>
    </ligand>
</feature>
<feature type="binding site" evidence="1">
    <location>
        <position position="151"/>
    </location>
    <ligand>
        <name>NAD(+)</name>
        <dbReference type="ChEBI" id="CHEBI:57540"/>
    </ligand>
</feature>
<feature type="binding site" evidence="1">
    <location>
        <begin position="169"/>
        <end position="172"/>
    </location>
    <ligand>
        <name>NAD(+)</name>
        <dbReference type="ChEBI" id="CHEBI:57540"/>
    </ligand>
</feature>
<feature type="binding site" evidence="1">
    <location>
        <position position="184"/>
    </location>
    <ligand>
        <name>Zn(2+)</name>
        <dbReference type="ChEBI" id="CHEBI:29105"/>
    </ligand>
</feature>
<feature type="binding site" evidence="1">
    <location>
        <position position="247"/>
    </location>
    <ligand>
        <name>Zn(2+)</name>
        <dbReference type="ChEBI" id="CHEBI:29105"/>
    </ligand>
</feature>
<feature type="binding site" evidence="1">
    <location>
        <position position="264"/>
    </location>
    <ligand>
        <name>Zn(2+)</name>
        <dbReference type="ChEBI" id="CHEBI:29105"/>
    </ligand>
</feature>
<accession>Q0K669</accession>
<dbReference type="EC" id="4.2.3.4" evidence="1"/>
<dbReference type="EMBL" id="AM260479">
    <property type="protein sequence ID" value="CAJ94502.1"/>
    <property type="molecule type" value="Genomic_DNA"/>
</dbReference>
<dbReference type="RefSeq" id="WP_010812350.1">
    <property type="nucleotide sequence ID" value="NZ_CP039287.1"/>
</dbReference>
<dbReference type="SMR" id="Q0K669"/>
<dbReference type="STRING" id="381666.H16_A3434"/>
<dbReference type="KEGG" id="reh:H16_A3434"/>
<dbReference type="eggNOG" id="COG0337">
    <property type="taxonomic scope" value="Bacteria"/>
</dbReference>
<dbReference type="HOGENOM" id="CLU_001201_0_2_4"/>
<dbReference type="OrthoDB" id="9806583at2"/>
<dbReference type="UniPathway" id="UPA00053">
    <property type="reaction ID" value="UER00085"/>
</dbReference>
<dbReference type="Proteomes" id="UP000008210">
    <property type="component" value="Chromosome 1"/>
</dbReference>
<dbReference type="GO" id="GO:0005737">
    <property type="term" value="C:cytoplasm"/>
    <property type="evidence" value="ECO:0007669"/>
    <property type="project" value="UniProtKB-SubCell"/>
</dbReference>
<dbReference type="GO" id="GO:0003856">
    <property type="term" value="F:3-dehydroquinate synthase activity"/>
    <property type="evidence" value="ECO:0007669"/>
    <property type="project" value="UniProtKB-UniRule"/>
</dbReference>
<dbReference type="GO" id="GO:0046872">
    <property type="term" value="F:metal ion binding"/>
    <property type="evidence" value="ECO:0007669"/>
    <property type="project" value="UniProtKB-KW"/>
</dbReference>
<dbReference type="GO" id="GO:0000166">
    <property type="term" value="F:nucleotide binding"/>
    <property type="evidence" value="ECO:0007669"/>
    <property type="project" value="UniProtKB-KW"/>
</dbReference>
<dbReference type="GO" id="GO:0008652">
    <property type="term" value="P:amino acid biosynthetic process"/>
    <property type="evidence" value="ECO:0007669"/>
    <property type="project" value="UniProtKB-KW"/>
</dbReference>
<dbReference type="GO" id="GO:0009073">
    <property type="term" value="P:aromatic amino acid family biosynthetic process"/>
    <property type="evidence" value="ECO:0007669"/>
    <property type="project" value="UniProtKB-KW"/>
</dbReference>
<dbReference type="GO" id="GO:0009423">
    <property type="term" value="P:chorismate biosynthetic process"/>
    <property type="evidence" value="ECO:0007669"/>
    <property type="project" value="UniProtKB-UniRule"/>
</dbReference>
<dbReference type="CDD" id="cd08195">
    <property type="entry name" value="DHQS"/>
    <property type="match status" value="1"/>
</dbReference>
<dbReference type="FunFam" id="3.40.50.1970:FF:000001">
    <property type="entry name" value="3-dehydroquinate synthase"/>
    <property type="match status" value="1"/>
</dbReference>
<dbReference type="Gene3D" id="3.40.50.1970">
    <property type="match status" value="1"/>
</dbReference>
<dbReference type="Gene3D" id="1.20.1090.10">
    <property type="entry name" value="Dehydroquinate synthase-like - alpha domain"/>
    <property type="match status" value="1"/>
</dbReference>
<dbReference type="HAMAP" id="MF_00110">
    <property type="entry name" value="DHQ_synthase"/>
    <property type="match status" value="1"/>
</dbReference>
<dbReference type="InterPro" id="IPR050071">
    <property type="entry name" value="Dehydroquinate_synthase"/>
</dbReference>
<dbReference type="InterPro" id="IPR016037">
    <property type="entry name" value="DHQ_synth_AroB"/>
</dbReference>
<dbReference type="InterPro" id="IPR030963">
    <property type="entry name" value="DHQ_synth_fam"/>
</dbReference>
<dbReference type="InterPro" id="IPR030960">
    <property type="entry name" value="DHQS/DOIS_N"/>
</dbReference>
<dbReference type="InterPro" id="IPR056179">
    <property type="entry name" value="DHQS_C"/>
</dbReference>
<dbReference type="NCBIfam" id="TIGR01357">
    <property type="entry name" value="aroB"/>
    <property type="match status" value="1"/>
</dbReference>
<dbReference type="PANTHER" id="PTHR43622">
    <property type="entry name" value="3-DEHYDROQUINATE SYNTHASE"/>
    <property type="match status" value="1"/>
</dbReference>
<dbReference type="PANTHER" id="PTHR43622:SF7">
    <property type="entry name" value="3-DEHYDROQUINATE SYNTHASE, CHLOROPLASTIC"/>
    <property type="match status" value="1"/>
</dbReference>
<dbReference type="Pfam" id="PF01761">
    <property type="entry name" value="DHQ_synthase"/>
    <property type="match status" value="1"/>
</dbReference>
<dbReference type="Pfam" id="PF24621">
    <property type="entry name" value="DHQS_C"/>
    <property type="match status" value="1"/>
</dbReference>
<dbReference type="PIRSF" id="PIRSF001455">
    <property type="entry name" value="DHQ_synth"/>
    <property type="match status" value="1"/>
</dbReference>
<dbReference type="SUPFAM" id="SSF56796">
    <property type="entry name" value="Dehydroquinate synthase-like"/>
    <property type="match status" value="1"/>
</dbReference>
<name>AROB_CUPNH</name>
<evidence type="ECO:0000255" key="1">
    <source>
        <dbReference type="HAMAP-Rule" id="MF_00110"/>
    </source>
</evidence>
<gene>
    <name evidence="1" type="primary">aroB</name>
    <name type="ordered locus">H16_A3434</name>
</gene>
<keyword id="KW-0028">Amino-acid biosynthesis</keyword>
<keyword id="KW-0057">Aromatic amino acid biosynthesis</keyword>
<keyword id="KW-0170">Cobalt</keyword>
<keyword id="KW-0963">Cytoplasm</keyword>
<keyword id="KW-0456">Lyase</keyword>
<keyword id="KW-0479">Metal-binding</keyword>
<keyword id="KW-0520">NAD</keyword>
<keyword id="KW-0547">Nucleotide-binding</keyword>
<keyword id="KW-1185">Reference proteome</keyword>
<keyword id="KW-0862">Zinc</keyword>
<protein>
    <recommendedName>
        <fullName evidence="1">3-dehydroquinate synthase</fullName>
        <shortName evidence="1">DHQS</shortName>
        <ecNumber evidence="1">4.2.3.4</ecNumber>
    </recommendedName>
</protein>
<reference key="1">
    <citation type="journal article" date="2006" name="Nat. Biotechnol.">
        <title>Genome sequence of the bioplastic-producing 'Knallgas' bacterium Ralstonia eutropha H16.</title>
        <authorList>
            <person name="Pohlmann A."/>
            <person name="Fricke W.F."/>
            <person name="Reinecke F."/>
            <person name="Kusian B."/>
            <person name="Liesegang H."/>
            <person name="Cramm R."/>
            <person name="Eitinger T."/>
            <person name="Ewering C."/>
            <person name="Poetter M."/>
            <person name="Schwartz E."/>
            <person name="Strittmatter A."/>
            <person name="Voss I."/>
            <person name="Gottschalk G."/>
            <person name="Steinbuechel A."/>
            <person name="Friedrich B."/>
            <person name="Bowien B."/>
        </authorList>
    </citation>
    <scope>NUCLEOTIDE SEQUENCE [LARGE SCALE GENOMIC DNA]</scope>
    <source>
        <strain>ATCC 17699 / DSM 428 / KCTC 22496 / NCIMB 10442 / H16 / Stanier 337</strain>
    </source>
</reference>
<organism>
    <name type="scientific">Cupriavidus necator (strain ATCC 17699 / DSM 428 / KCTC 22496 / NCIMB 10442 / H16 / Stanier 337)</name>
    <name type="common">Ralstonia eutropha</name>
    <dbReference type="NCBI Taxonomy" id="381666"/>
    <lineage>
        <taxon>Bacteria</taxon>
        <taxon>Pseudomonadati</taxon>
        <taxon>Pseudomonadota</taxon>
        <taxon>Betaproteobacteria</taxon>
        <taxon>Burkholderiales</taxon>
        <taxon>Burkholderiaceae</taxon>
        <taxon>Cupriavidus</taxon>
    </lineage>
</organism>
<proteinExistence type="inferred from homology"/>